<accession>Q82L07</accession>
<protein>
    <recommendedName>
        <fullName evidence="1">UDP-N-acetylmuramate--L-alanine ligase</fullName>
        <ecNumber evidence="1">6.3.2.8</ecNumber>
    </recommendedName>
    <alternativeName>
        <fullName evidence="1">UDP-N-acetylmuramoyl-L-alanine synthetase</fullName>
    </alternativeName>
</protein>
<organism>
    <name type="scientific">Streptomyces avermitilis (strain ATCC 31267 / DSM 46492 / JCM 5070 / NBRC 14893 / NCIMB 12804 / NRRL 8165 / MA-4680)</name>
    <dbReference type="NCBI Taxonomy" id="227882"/>
    <lineage>
        <taxon>Bacteria</taxon>
        <taxon>Bacillati</taxon>
        <taxon>Actinomycetota</taxon>
        <taxon>Actinomycetes</taxon>
        <taxon>Kitasatosporales</taxon>
        <taxon>Streptomycetaceae</taxon>
        <taxon>Streptomyces</taxon>
    </lineage>
</organism>
<gene>
    <name evidence="1" type="primary">murC</name>
    <name type="ordered locus">SAV_2205</name>
</gene>
<reference key="1">
    <citation type="journal article" date="2001" name="Proc. Natl. Acad. Sci. U.S.A.">
        <title>Genome sequence of an industrial microorganism Streptomyces avermitilis: deducing the ability of producing secondary metabolites.</title>
        <authorList>
            <person name="Omura S."/>
            <person name="Ikeda H."/>
            <person name="Ishikawa J."/>
            <person name="Hanamoto A."/>
            <person name="Takahashi C."/>
            <person name="Shinose M."/>
            <person name="Takahashi Y."/>
            <person name="Horikawa H."/>
            <person name="Nakazawa H."/>
            <person name="Osonoe T."/>
            <person name="Kikuchi H."/>
            <person name="Shiba T."/>
            <person name="Sakaki Y."/>
            <person name="Hattori M."/>
        </authorList>
    </citation>
    <scope>NUCLEOTIDE SEQUENCE [LARGE SCALE GENOMIC DNA]</scope>
    <source>
        <strain>ATCC 31267 / DSM 46492 / JCM 5070 / NBRC 14893 / NCIMB 12804 / NRRL 8165 / MA-4680</strain>
    </source>
</reference>
<reference key="2">
    <citation type="journal article" date="2003" name="Nat. Biotechnol.">
        <title>Complete genome sequence and comparative analysis of the industrial microorganism Streptomyces avermitilis.</title>
        <authorList>
            <person name="Ikeda H."/>
            <person name="Ishikawa J."/>
            <person name="Hanamoto A."/>
            <person name="Shinose M."/>
            <person name="Kikuchi H."/>
            <person name="Shiba T."/>
            <person name="Sakaki Y."/>
            <person name="Hattori M."/>
            <person name="Omura S."/>
        </authorList>
    </citation>
    <scope>NUCLEOTIDE SEQUENCE [LARGE SCALE GENOMIC DNA]</scope>
    <source>
        <strain>ATCC 31267 / DSM 46492 / JCM 5070 / NBRC 14893 / NCIMB 12804 / NRRL 8165 / MA-4680</strain>
    </source>
</reference>
<sequence>MAPGLPTAMDRPHFIGIGGAGMSGIAKILAQRGAKVAGSDAKESETAEALRALGATVHIGHAAEHLADDATCVVVSSAIRADNPELARAAELGIPVVHRSDALARLMDGLRPIAVAGTHGKTTTTSMLAVSLSTLGLAPSYAIGGDLDAPGSNALHGEGDIFVAEADESDRSFHKYAPDVAIVLNVELDHHANYASMDEIYASFETFVDRITEGGTLVIAADHEGARELTRRVTASGVRVVTYGESADADVCVLSVTAQGLKSEVEVLLDGTELTFTVSVPGRHYAHNAVAALAAGVALGIPAADLASALAAYTGVKRRLQLKGEEAGVQVIDSYAHHPTEMTADLEAMRAAAGDARILVVFQPHLFSRTQELGKEMGQALALADASVVLDIYPAREDPIPGITSELIIEAARAAGADVTPVHDKAEVPSVIAGMARPGDLVLTMGAGDVTELGPRILDRLSKQ</sequence>
<name>MURC_STRAW</name>
<keyword id="KW-0067">ATP-binding</keyword>
<keyword id="KW-0131">Cell cycle</keyword>
<keyword id="KW-0132">Cell division</keyword>
<keyword id="KW-0133">Cell shape</keyword>
<keyword id="KW-0961">Cell wall biogenesis/degradation</keyword>
<keyword id="KW-0963">Cytoplasm</keyword>
<keyword id="KW-0436">Ligase</keyword>
<keyword id="KW-0547">Nucleotide-binding</keyword>
<keyword id="KW-0573">Peptidoglycan synthesis</keyword>
<keyword id="KW-1185">Reference proteome</keyword>
<comment type="function">
    <text evidence="1">Cell wall formation.</text>
</comment>
<comment type="catalytic activity">
    <reaction evidence="1">
        <text>UDP-N-acetyl-alpha-D-muramate + L-alanine + ATP = UDP-N-acetyl-alpha-D-muramoyl-L-alanine + ADP + phosphate + H(+)</text>
        <dbReference type="Rhea" id="RHEA:23372"/>
        <dbReference type="ChEBI" id="CHEBI:15378"/>
        <dbReference type="ChEBI" id="CHEBI:30616"/>
        <dbReference type="ChEBI" id="CHEBI:43474"/>
        <dbReference type="ChEBI" id="CHEBI:57972"/>
        <dbReference type="ChEBI" id="CHEBI:70757"/>
        <dbReference type="ChEBI" id="CHEBI:83898"/>
        <dbReference type="ChEBI" id="CHEBI:456216"/>
        <dbReference type="EC" id="6.3.2.8"/>
    </reaction>
</comment>
<comment type="pathway">
    <text evidence="1">Cell wall biogenesis; peptidoglycan biosynthesis.</text>
</comment>
<comment type="subcellular location">
    <subcellularLocation>
        <location evidence="1">Cytoplasm</location>
    </subcellularLocation>
</comment>
<comment type="similarity">
    <text evidence="1">Belongs to the MurCDEF family.</text>
</comment>
<dbReference type="EC" id="6.3.2.8" evidence="1"/>
<dbReference type="EMBL" id="BA000030">
    <property type="protein sequence ID" value="BAC69916.1"/>
    <property type="molecule type" value="Genomic_DNA"/>
</dbReference>
<dbReference type="RefSeq" id="WP_010983645.1">
    <property type="nucleotide sequence ID" value="NZ_JZJK01000086.1"/>
</dbReference>
<dbReference type="SMR" id="Q82L07"/>
<dbReference type="GeneID" id="41539300"/>
<dbReference type="KEGG" id="sma:SAVERM_2205"/>
<dbReference type="eggNOG" id="COG0773">
    <property type="taxonomic scope" value="Bacteria"/>
</dbReference>
<dbReference type="HOGENOM" id="CLU_028104_2_1_11"/>
<dbReference type="OrthoDB" id="9804126at2"/>
<dbReference type="UniPathway" id="UPA00219"/>
<dbReference type="Proteomes" id="UP000000428">
    <property type="component" value="Chromosome"/>
</dbReference>
<dbReference type="GO" id="GO:0005737">
    <property type="term" value="C:cytoplasm"/>
    <property type="evidence" value="ECO:0007669"/>
    <property type="project" value="UniProtKB-SubCell"/>
</dbReference>
<dbReference type="GO" id="GO:0005524">
    <property type="term" value="F:ATP binding"/>
    <property type="evidence" value="ECO:0007669"/>
    <property type="project" value="UniProtKB-UniRule"/>
</dbReference>
<dbReference type="GO" id="GO:0008763">
    <property type="term" value="F:UDP-N-acetylmuramate-L-alanine ligase activity"/>
    <property type="evidence" value="ECO:0007669"/>
    <property type="project" value="UniProtKB-UniRule"/>
</dbReference>
<dbReference type="GO" id="GO:0051301">
    <property type="term" value="P:cell division"/>
    <property type="evidence" value="ECO:0007669"/>
    <property type="project" value="UniProtKB-KW"/>
</dbReference>
<dbReference type="GO" id="GO:0071555">
    <property type="term" value="P:cell wall organization"/>
    <property type="evidence" value="ECO:0007669"/>
    <property type="project" value="UniProtKB-KW"/>
</dbReference>
<dbReference type="GO" id="GO:0009252">
    <property type="term" value="P:peptidoglycan biosynthetic process"/>
    <property type="evidence" value="ECO:0007669"/>
    <property type="project" value="UniProtKB-UniRule"/>
</dbReference>
<dbReference type="GO" id="GO:0008360">
    <property type="term" value="P:regulation of cell shape"/>
    <property type="evidence" value="ECO:0007669"/>
    <property type="project" value="UniProtKB-KW"/>
</dbReference>
<dbReference type="Gene3D" id="3.90.190.20">
    <property type="entry name" value="Mur ligase, C-terminal domain"/>
    <property type="match status" value="1"/>
</dbReference>
<dbReference type="Gene3D" id="3.40.1190.10">
    <property type="entry name" value="Mur-like, catalytic domain"/>
    <property type="match status" value="1"/>
</dbReference>
<dbReference type="Gene3D" id="3.40.50.720">
    <property type="entry name" value="NAD(P)-binding Rossmann-like Domain"/>
    <property type="match status" value="1"/>
</dbReference>
<dbReference type="HAMAP" id="MF_00046">
    <property type="entry name" value="MurC"/>
    <property type="match status" value="1"/>
</dbReference>
<dbReference type="InterPro" id="IPR036565">
    <property type="entry name" value="Mur-like_cat_sf"/>
</dbReference>
<dbReference type="InterPro" id="IPR004101">
    <property type="entry name" value="Mur_ligase_C"/>
</dbReference>
<dbReference type="InterPro" id="IPR036615">
    <property type="entry name" value="Mur_ligase_C_dom_sf"/>
</dbReference>
<dbReference type="InterPro" id="IPR013221">
    <property type="entry name" value="Mur_ligase_cen"/>
</dbReference>
<dbReference type="InterPro" id="IPR000713">
    <property type="entry name" value="Mur_ligase_N"/>
</dbReference>
<dbReference type="InterPro" id="IPR050061">
    <property type="entry name" value="MurCDEF_pg_biosynth"/>
</dbReference>
<dbReference type="InterPro" id="IPR005758">
    <property type="entry name" value="UDP-N-AcMur_Ala_ligase_MurC"/>
</dbReference>
<dbReference type="NCBIfam" id="TIGR01082">
    <property type="entry name" value="murC"/>
    <property type="match status" value="1"/>
</dbReference>
<dbReference type="PANTHER" id="PTHR43445:SF3">
    <property type="entry name" value="UDP-N-ACETYLMURAMATE--L-ALANINE LIGASE"/>
    <property type="match status" value="1"/>
</dbReference>
<dbReference type="PANTHER" id="PTHR43445">
    <property type="entry name" value="UDP-N-ACETYLMURAMATE--L-ALANINE LIGASE-RELATED"/>
    <property type="match status" value="1"/>
</dbReference>
<dbReference type="Pfam" id="PF01225">
    <property type="entry name" value="Mur_ligase"/>
    <property type="match status" value="1"/>
</dbReference>
<dbReference type="Pfam" id="PF02875">
    <property type="entry name" value="Mur_ligase_C"/>
    <property type="match status" value="1"/>
</dbReference>
<dbReference type="Pfam" id="PF08245">
    <property type="entry name" value="Mur_ligase_M"/>
    <property type="match status" value="1"/>
</dbReference>
<dbReference type="SUPFAM" id="SSF51984">
    <property type="entry name" value="MurCD N-terminal domain"/>
    <property type="match status" value="1"/>
</dbReference>
<dbReference type="SUPFAM" id="SSF53623">
    <property type="entry name" value="MurD-like peptide ligases, catalytic domain"/>
    <property type="match status" value="1"/>
</dbReference>
<dbReference type="SUPFAM" id="SSF53244">
    <property type="entry name" value="MurD-like peptide ligases, peptide-binding domain"/>
    <property type="match status" value="1"/>
</dbReference>
<proteinExistence type="inferred from homology"/>
<evidence type="ECO:0000255" key="1">
    <source>
        <dbReference type="HAMAP-Rule" id="MF_00046"/>
    </source>
</evidence>
<feature type="chain" id="PRO_0000182163" description="UDP-N-acetylmuramate--L-alanine ligase">
    <location>
        <begin position="1"/>
        <end position="464"/>
    </location>
</feature>
<feature type="binding site" evidence="1">
    <location>
        <begin position="117"/>
        <end position="123"/>
    </location>
    <ligand>
        <name>ATP</name>
        <dbReference type="ChEBI" id="CHEBI:30616"/>
    </ligand>
</feature>